<comment type="function">
    <text evidence="3">Plays a role in motile cilium function, possibly by acting on outer dynein arm assembly. Seems to be important for initiation rather than maintenance of cilium motility. Required for correct positioning of cilia at the apical cell surface, suggesting an additional role in the planar cell polarity (PCP) pathway. May suppress canonical Wnt signaling activity.</text>
</comment>
<comment type="subunit">
    <text evidence="2">Interacts with ZMYND10.</text>
</comment>
<comment type="subcellular location">
    <subcellularLocation>
        <location evidence="4">Cytoplasm</location>
    </subcellularLocation>
    <subcellularLocation>
        <location evidence="1">Cytoplasm</location>
        <location evidence="1">Cytoskeleton</location>
        <location evidence="1">Cilium basal body</location>
    </subcellularLocation>
    <text evidence="4">Partially colocalized with SASS6 in cytoplasmic puncta, suggesting a centrosomal localization.</text>
</comment>
<comment type="tissue specificity">
    <text evidence="4">Expressed in the trachea (at protein level).</text>
</comment>
<comment type="similarity">
    <text evidence="5">Belongs to the CFAP298 family.</text>
</comment>
<evidence type="ECO:0000250" key="1">
    <source>
        <dbReference type="UniProtKB" id="A0A1L8HCK2"/>
    </source>
</evidence>
<evidence type="ECO:0000250" key="2">
    <source>
        <dbReference type="UniProtKB" id="P57076"/>
    </source>
</evidence>
<evidence type="ECO:0000250" key="3">
    <source>
        <dbReference type="UniProtKB" id="Q6DRC3"/>
    </source>
</evidence>
<evidence type="ECO:0000269" key="4">
    <source>
    </source>
</evidence>
<evidence type="ECO:0000305" key="5"/>
<evidence type="ECO:0000312" key="6">
    <source>
        <dbReference type="RGD" id="1306954"/>
    </source>
</evidence>
<proteinExistence type="evidence at protein level"/>
<protein>
    <recommendedName>
        <fullName evidence="5">Cilia- and flagella-associated protein 298</fullName>
    </recommendedName>
    <alternativeName>
        <fullName evidence="5">Protein kurly homolog</fullName>
    </alternativeName>
</protein>
<reference key="1">
    <citation type="journal article" date="2004" name="Nature">
        <title>Genome sequence of the Brown Norway rat yields insights into mammalian evolution.</title>
        <authorList>
            <person name="Gibbs R.A."/>
            <person name="Weinstock G.M."/>
            <person name="Metzker M.L."/>
            <person name="Muzny D.M."/>
            <person name="Sodergren E.J."/>
            <person name="Scherer S."/>
            <person name="Scott G."/>
            <person name="Steffen D."/>
            <person name="Worley K.C."/>
            <person name="Burch P.E."/>
            <person name="Okwuonu G."/>
            <person name="Hines S."/>
            <person name="Lewis L."/>
            <person name="Deramo C."/>
            <person name="Delgado O."/>
            <person name="Dugan-Rocha S."/>
            <person name="Miner G."/>
            <person name="Morgan M."/>
            <person name="Hawes A."/>
            <person name="Gill R."/>
            <person name="Holt R.A."/>
            <person name="Adams M.D."/>
            <person name="Amanatides P.G."/>
            <person name="Baden-Tillson H."/>
            <person name="Barnstead M."/>
            <person name="Chin S."/>
            <person name="Evans C.A."/>
            <person name="Ferriera S."/>
            <person name="Fosler C."/>
            <person name="Glodek A."/>
            <person name="Gu Z."/>
            <person name="Jennings D."/>
            <person name="Kraft C.L."/>
            <person name="Nguyen T."/>
            <person name="Pfannkoch C.M."/>
            <person name="Sitter C."/>
            <person name="Sutton G.G."/>
            <person name="Venter J.C."/>
            <person name="Woodage T."/>
            <person name="Smith D."/>
            <person name="Lee H.-M."/>
            <person name="Gustafson E."/>
            <person name="Cahill P."/>
            <person name="Kana A."/>
            <person name="Doucette-Stamm L."/>
            <person name="Weinstock K."/>
            <person name="Fechtel K."/>
            <person name="Weiss R.B."/>
            <person name="Dunn D.M."/>
            <person name="Green E.D."/>
            <person name="Blakesley R.W."/>
            <person name="Bouffard G.G."/>
            <person name="De Jong P.J."/>
            <person name="Osoegawa K."/>
            <person name="Zhu B."/>
            <person name="Marra M."/>
            <person name="Schein J."/>
            <person name="Bosdet I."/>
            <person name="Fjell C."/>
            <person name="Jones S."/>
            <person name="Krzywinski M."/>
            <person name="Mathewson C."/>
            <person name="Siddiqui A."/>
            <person name="Wye N."/>
            <person name="McPherson J."/>
            <person name="Zhao S."/>
            <person name="Fraser C.M."/>
            <person name="Shetty J."/>
            <person name="Shatsman S."/>
            <person name="Geer K."/>
            <person name="Chen Y."/>
            <person name="Abramzon S."/>
            <person name="Nierman W.C."/>
            <person name="Havlak P.H."/>
            <person name="Chen R."/>
            <person name="Durbin K.J."/>
            <person name="Egan A."/>
            <person name="Ren Y."/>
            <person name="Song X.-Z."/>
            <person name="Li B."/>
            <person name="Liu Y."/>
            <person name="Qin X."/>
            <person name="Cawley S."/>
            <person name="Cooney A.J."/>
            <person name="D'Souza L.M."/>
            <person name="Martin K."/>
            <person name="Wu J.Q."/>
            <person name="Gonzalez-Garay M.L."/>
            <person name="Jackson A.R."/>
            <person name="Kalafus K.J."/>
            <person name="McLeod M.P."/>
            <person name="Milosavljevic A."/>
            <person name="Virk D."/>
            <person name="Volkov A."/>
            <person name="Wheeler D.A."/>
            <person name="Zhang Z."/>
            <person name="Bailey J.A."/>
            <person name="Eichler E.E."/>
            <person name="Tuzun E."/>
            <person name="Birney E."/>
            <person name="Mongin E."/>
            <person name="Ureta-Vidal A."/>
            <person name="Woodwark C."/>
            <person name="Zdobnov E."/>
            <person name="Bork P."/>
            <person name="Suyama M."/>
            <person name="Torrents D."/>
            <person name="Alexandersson M."/>
            <person name="Trask B.J."/>
            <person name="Young J.M."/>
            <person name="Huang H."/>
            <person name="Wang H."/>
            <person name="Xing H."/>
            <person name="Daniels S."/>
            <person name="Gietzen D."/>
            <person name="Schmidt J."/>
            <person name="Stevens K."/>
            <person name="Vitt U."/>
            <person name="Wingrove J."/>
            <person name="Camara F."/>
            <person name="Mar Alba M."/>
            <person name="Abril J.F."/>
            <person name="Guigo R."/>
            <person name="Smit A."/>
            <person name="Dubchak I."/>
            <person name="Rubin E.M."/>
            <person name="Couronne O."/>
            <person name="Poliakov A."/>
            <person name="Huebner N."/>
            <person name="Ganten D."/>
            <person name="Goesele C."/>
            <person name="Hummel O."/>
            <person name="Kreitler T."/>
            <person name="Lee Y.-A."/>
            <person name="Monti J."/>
            <person name="Schulz H."/>
            <person name="Zimdahl H."/>
            <person name="Himmelbauer H."/>
            <person name="Lehrach H."/>
            <person name="Jacob H.J."/>
            <person name="Bromberg S."/>
            <person name="Gullings-Handley J."/>
            <person name="Jensen-Seaman M.I."/>
            <person name="Kwitek A.E."/>
            <person name="Lazar J."/>
            <person name="Pasko D."/>
            <person name="Tonellato P.J."/>
            <person name="Twigger S."/>
            <person name="Ponting C.P."/>
            <person name="Duarte J.M."/>
            <person name="Rice S."/>
            <person name="Goodstadt L."/>
            <person name="Beatson S.A."/>
            <person name="Emes R.D."/>
            <person name="Winter E.E."/>
            <person name="Webber C."/>
            <person name="Brandt P."/>
            <person name="Nyakatura G."/>
            <person name="Adetobi M."/>
            <person name="Chiaromonte F."/>
            <person name="Elnitski L."/>
            <person name="Eswara P."/>
            <person name="Hardison R.C."/>
            <person name="Hou M."/>
            <person name="Kolbe D."/>
            <person name="Makova K."/>
            <person name="Miller W."/>
            <person name="Nekrutenko A."/>
            <person name="Riemer C."/>
            <person name="Schwartz S."/>
            <person name="Taylor J."/>
            <person name="Yang S."/>
            <person name="Zhang Y."/>
            <person name="Lindpaintner K."/>
            <person name="Andrews T.D."/>
            <person name="Caccamo M."/>
            <person name="Clamp M."/>
            <person name="Clarke L."/>
            <person name="Curwen V."/>
            <person name="Durbin R.M."/>
            <person name="Eyras E."/>
            <person name="Searle S.M."/>
            <person name="Cooper G.M."/>
            <person name="Batzoglou S."/>
            <person name="Brudno M."/>
            <person name="Sidow A."/>
            <person name="Stone E.A."/>
            <person name="Payseur B.A."/>
            <person name="Bourque G."/>
            <person name="Lopez-Otin C."/>
            <person name="Puente X.S."/>
            <person name="Chakrabarti K."/>
            <person name="Chatterji S."/>
            <person name="Dewey C."/>
            <person name="Pachter L."/>
            <person name="Bray N."/>
            <person name="Yap V.B."/>
            <person name="Caspi A."/>
            <person name="Tesler G."/>
            <person name="Pevzner P.A."/>
            <person name="Haussler D."/>
            <person name="Roskin K.M."/>
            <person name="Baertsch R."/>
            <person name="Clawson H."/>
            <person name="Furey T.S."/>
            <person name="Hinrichs A.S."/>
            <person name="Karolchik D."/>
            <person name="Kent W.J."/>
            <person name="Rosenbloom K.R."/>
            <person name="Trumbower H."/>
            <person name="Weirauch M."/>
            <person name="Cooper D.N."/>
            <person name="Stenson P.D."/>
            <person name="Ma B."/>
            <person name="Brent M."/>
            <person name="Arumugam M."/>
            <person name="Shteynberg D."/>
            <person name="Copley R.R."/>
            <person name="Taylor M.S."/>
            <person name="Riethman H."/>
            <person name="Mudunuri U."/>
            <person name="Peterson J."/>
            <person name="Guyer M."/>
            <person name="Felsenfeld A."/>
            <person name="Old S."/>
            <person name="Mockrin S."/>
            <person name="Collins F.S."/>
        </authorList>
    </citation>
    <scope>NUCLEOTIDE SEQUENCE [LARGE SCALE GENOMIC DNA]</scope>
    <source>
        <strain>Brown Norway</strain>
    </source>
</reference>
<reference key="2">
    <citation type="submission" date="2005-07" db="EMBL/GenBank/DDBJ databases">
        <authorList>
            <person name="Mural R.J."/>
            <person name="Adams M.D."/>
            <person name="Myers E.W."/>
            <person name="Smith H.O."/>
            <person name="Venter J.C."/>
        </authorList>
    </citation>
    <scope>NUCLEOTIDE SEQUENCE [LARGE SCALE GENOMIC DNA]</scope>
</reference>
<reference key="3">
    <citation type="journal article" date="2004" name="Genome Res.">
        <title>The status, quality, and expansion of the NIH full-length cDNA project: the Mammalian Gene Collection (MGC).</title>
        <authorList>
            <consortium name="The MGC Project Team"/>
        </authorList>
    </citation>
    <scope>NUCLEOTIDE SEQUENCE [LARGE SCALE MRNA]</scope>
    <source>
        <tissue>Ovary</tissue>
    </source>
</reference>
<reference key="4">
    <citation type="journal article" date="2013" name="Am. J. Hum. Genet.">
        <title>Zebrafish ciliopathy screen plus human mutational analysis identifies C21orf59 and CCDC65 defects as causing primary ciliary dyskinesia.</title>
        <authorList>
            <person name="Austin-Tse C."/>
            <person name="Halbritter J."/>
            <person name="Zariwala M.A."/>
            <person name="Gilberti R.M."/>
            <person name="Gee H.Y."/>
            <person name="Hellman N."/>
            <person name="Pathak N."/>
            <person name="Liu Y."/>
            <person name="Panizzi J.R."/>
            <person name="Patel-King R.S."/>
            <person name="Tritschler D."/>
            <person name="Bower R."/>
            <person name="O'Toole E."/>
            <person name="Porath J.D."/>
            <person name="Hurd T.W."/>
            <person name="Chaki M."/>
            <person name="Diaz K.A."/>
            <person name="Kohl S."/>
            <person name="Lovric S."/>
            <person name="Hwang D.Y."/>
            <person name="Braun D.A."/>
            <person name="Schueler M."/>
            <person name="Airik R."/>
            <person name="Otto E.A."/>
            <person name="Leigh M.W."/>
            <person name="Noone P.G."/>
            <person name="Carson J.L."/>
            <person name="Davis S.D."/>
            <person name="Pittman J.E."/>
            <person name="Ferkol T.W."/>
            <person name="Atkinson J.J."/>
            <person name="Olivier K.N."/>
            <person name="Sagel S.D."/>
            <person name="Dell S.D."/>
            <person name="Rosenfeld M."/>
            <person name="Milla C.E."/>
            <person name="Loges N.T."/>
            <person name="Omran H."/>
            <person name="Porter M.E."/>
            <person name="King S.M."/>
            <person name="Knowles M.R."/>
            <person name="Drummond I.A."/>
            <person name="Hildebrandt F."/>
        </authorList>
    </citation>
    <scope>SUBCELLULAR LOCATION</scope>
    <scope>TISSUE SPECIFICITY</scope>
</reference>
<accession>Q5U3Z0</accession>
<sequence length="290" mass="33243">MVVLHVKRGDESQFLLQAPGSTELEELTAQVTRVYNGRLKVHRLCTEIEELAEHGVFLPPNMQGLTDEQIEELKLKDEWGEKCVPSGGSVFTKDDIGRRNGHAPNEKMKQVLKKTVEEAKAMVSKKQVEAGVFVTMEMVKDALDQLRGAVMIVYPMGLPPYDPIRMEFENKEDLSGTQAALEVIQESEAQLWWAAKELRRTKKLSDYVGKNEKTKIIVKIQQRGQGAPAREPLISSEEHKQLMLFYHRRQEELKKLEENDDDSCLNSPWADNTALKRHFHGVKDIKWRPR</sequence>
<name>CF298_RAT</name>
<keyword id="KW-0966">Cell projection</keyword>
<keyword id="KW-0969">Cilium</keyword>
<keyword id="KW-0963">Cytoplasm</keyword>
<keyword id="KW-0206">Cytoskeleton</keyword>
<keyword id="KW-1185">Reference proteome</keyword>
<dbReference type="EMBL" id="AABR06067650">
    <property type="status" value="NOT_ANNOTATED_CDS"/>
    <property type="molecule type" value="Genomic_DNA"/>
</dbReference>
<dbReference type="EMBL" id="CH473989">
    <property type="protein sequence ID" value="EDM10699.1"/>
    <property type="molecule type" value="Genomic_DNA"/>
</dbReference>
<dbReference type="EMBL" id="BC085340">
    <property type="protein sequence ID" value="AAH85340.1"/>
    <property type="molecule type" value="mRNA"/>
</dbReference>
<dbReference type="RefSeq" id="NP_001008289.1">
    <property type="nucleotide sequence ID" value="NM_001008288.1"/>
</dbReference>
<dbReference type="FunCoup" id="Q5U3Z0">
    <property type="interactions" value="1502"/>
</dbReference>
<dbReference type="STRING" id="10116.ENSRNOP00000030489"/>
<dbReference type="iPTMnet" id="Q5U3Z0"/>
<dbReference type="PhosphoSitePlus" id="Q5U3Z0"/>
<dbReference type="PaxDb" id="10116-ENSRNOP00000030489"/>
<dbReference type="GeneID" id="288269"/>
<dbReference type="KEGG" id="rno:288269"/>
<dbReference type="UCSC" id="RGD:1306954">
    <property type="organism name" value="rat"/>
</dbReference>
<dbReference type="AGR" id="RGD:1306954"/>
<dbReference type="CTD" id="56683"/>
<dbReference type="RGD" id="1306954">
    <property type="gene designation" value="Cfap298"/>
</dbReference>
<dbReference type="VEuPathDB" id="HostDB:ENSRNOG00000021399"/>
<dbReference type="eggNOG" id="ENOG502QQ3Z">
    <property type="taxonomic scope" value="Eukaryota"/>
</dbReference>
<dbReference type="HOGENOM" id="CLU_064854_0_0_1"/>
<dbReference type="InParanoid" id="Q5U3Z0"/>
<dbReference type="OrthoDB" id="276065at2759"/>
<dbReference type="PhylomeDB" id="Q5U3Z0"/>
<dbReference type="TreeFam" id="TF323482"/>
<dbReference type="PRO" id="PR:Q5U3Z0"/>
<dbReference type="Proteomes" id="UP000002494">
    <property type="component" value="Chromosome 11"/>
</dbReference>
<dbReference type="Proteomes" id="UP000234681">
    <property type="component" value="Chromosome 11"/>
</dbReference>
<dbReference type="Bgee" id="ENSRNOG00000021399">
    <property type="expression patterns" value="Expressed in ovary and 20 other cell types or tissues"/>
</dbReference>
<dbReference type="GO" id="GO:0005813">
    <property type="term" value="C:centrosome"/>
    <property type="evidence" value="ECO:0007669"/>
    <property type="project" value="Ensembl"/>
</dbReference>
<dbReference type="GO" id="GO:0036064">
    <property type="term" value="C:ciliary basal body"/>
    <property type="evidence" value="ECO:0007669"/>
    <property type="project" value="Ensembl"/>
</dbReference>
<dbReference type="GO" id="GO:0005829">
    <property type="term" value="C:cytosol"/>
    <property type="evidence" value="ECO:0000314"/>
    <property type="project" value="UniProtKB"/>
</dbReference>
<dbReference type="GO" id="GO:0005654">
    <property type="term" value="C:nucleoplasm"/>
    <property type="evidence" value="ECO:0007669"/>
    <property type="project" value="Ensembl"/>
</dbReference>
<dbReference type="GO" id="GO:0060271">
    <property type="term" value="P:cilium assembly"/>
    <property type="evidence" value="ECO:0000266"/>
    <property type="project" value="RGD"/>
</dbReference>
<dbReference type="GO" id="GO:0003352">
    <property type="term" value="P:regulation of cilium movement"/>
    <property type="evidence" value="ECO:0000266"/>
    <property type="project" value="RGD"/>
</dbReference>
<dbReference type="InterPro" id="IPR021298">
    <property type="entry name" value="CFAP298"/>
</dbReference>
<dbReference type="PANTHER" id="PTHR13238:SF0">
    <property type="entry name" value="CILIA- AND FLAGELLA-ASSOCIATED PROTEIN 298"/>
    <property type="match status" value="1"/>
</dbReference>
<dbReference type="PANTHER" id="PTHR13238">
    <property type="entry name" value="PROTEIN C21ORF59"/>
    <property type="match status" value="1"/>
</dbReference>
<dbReference type="Pfam" id="PF11069">
    <property type="entry name" value="CFAP298"/>
    <property type="match status" value="1"/>
</dbReference>
<feature type="chain" id="PRO_0000424912" description="Cilia- and flagella-associated protein 298">
    <location>
        <begin position="1"/>
        <end position="290"/>
    </location>
</feature>
<gene>
    <name evidence="6" type="primary">Cfap298</name>
</gene>
<organism>
    <name type="scientific">Rattus norvegicus</name>
    <name type="common">Rat</name>
    <dbReference type="NCBI Taxonomy" id="10116"/>
    <lineage>
        <taxon>Eukaryota</taxon>
        <taxon>Metazoa</taxon>
        <taxon>Chordata</taxon>
        <taxon>Craniata</taxon>
        <taxon>Vertebrata</taxon>
        <taxon>Euteleostomi</taxon>
        <taxon>Mammalia</taxon>
        <taxon>Eutheria</taxon>
        <taxon>Euarchontoglires</taxon>
        <taxon>Glires</taxon>
        <taxon>Rodentia</taxon>
        <taxon>Myomorpha</taxon>
        <taxon>Muroidea</taxon>
        <taxon>Muridae</taxon>
        <taxon>Murinae</taxon>
        <taxon>Rattus</taxon>
    </lineage>
</organism>